<protein>
    <recommendedName>
        <fullName evidence="2">D-alanine--D-alanine ligase</fullName>
        <ecNumber evidence="2">6.3.2.4</ecNumber>
    </recommendedName>
    <alternativeName>
        <fullName evidence="2">D-Ala-D-Ala ligase</fullName>
    </alternativeName>
    <alternativeName>
        <fullName evidence="2">D-alanylalanine synthetase</fullName>
    </alternativeName>
</protein>
<comment type="function">
    <text evidence="2">Cell wall formation.</text>
</comment>
<comment type="catalytic activity">
    <reaction evidence="2">
        <text>2 D-alanine + ATP = D-alanyl-D-alanine + ADP + phosphate + H(+)</text>
        <dbReference type="Rhea" id="RHEA:11224"/>
        <dbReference type="ChEBI" id="CHEBI:15378"/>
        <dbReference type="ChEBI" id="CHEBI:30616"/>
        <dbReference type="ChEBI" id="CHEBI:43474"/>
        <dbReference type="ChEBI" id="CHEBI:57416"/>
        <dbReference type="ChEBI" id="CHEBI:57822"/>
        <dbReference type="ChEBI" id="CHEBI:456216"/>
        <dbReference type="EC" id="6.3.2.4"/>
    </reaction>
</comment>
<comment type="cofactor">
    <cofactor evidence="1">
        <name>Mg(2+)</name>
        <dbReference type="ChEBI" id="CHEBI:18420"/>
    </cofactor>
    <cofactor evidence="1">
        <name>Mn(2+)</name>
        <dbReference type="ChEBI" id="CHEBI:29035"/>
    </cofactor>
    <text evidence="1">Binds 2 magnesium or manganese ions per subunit.</text>
</comment>
<comment type="pathway">
    <text evidence="2">Cell wall biogenesis; peptidoglycan biosynthesis.</text>
</comment>
<comment type="subcellular location">
    <subcellularLocation>
        <location evidence="2">Cytoplasm</location>
    </subcellularLocation>
</comment>
<comment type="similarity">
    <text evidence="2">Belongs to the D-alanine--D-alanine ligase family.</text>
</comment>
<organism>
    <name type="scientific">Ligilactobacillus salivarius (strain UCC118)</name>
    <name type="common">Lactobacillus salivarius</name>
    <dbReference type="NCBI Taxonomy" id="362948"/>
    <lineage>
        <taxon>Bacteria</taxon>
        <taxon>Bacillati</taxon>
        <taxon>Bacillota</taxon>
        <taxon>Bacilli</taxon>
        <taxon>Lactobacillales</taxon>
        <taxon>Lactobacillaceae</taxon>
        <taxon>Ligilactobacillus</taxon>
    </lineage>
</organism>
<reference key="1">
    <citation type="journal article" date="2006" name="Proc. Natl. Acad. Sci. U.S.A.">
        <title>Multireplicon genome architecture of Lactobacillus salivarius.</title>
        <authorList>
            <person name="Claesson M.J."/>
            <person name="Li Y."/>
            <person name="Leahy S."/>
            <person name="Canchaya C."/>
            <person name="van Pijkeren J.P."/>
            <person name="Cerdeno-Tarraga A.M."/>
            <person name="Parkhill J."/>
            <person name="Flynn S."/>
            <person name="O'Sullivan G.C."/>
            <person name="Collins J.K."/>
            <person name="Higgins D."/>
            <person name="Shanahan F."/>
            <person name="Fitzgerald G.F."/>
            <person name="van Sinderen D."/>
            <person name="O'Toole P.W."/>
        </authorList>
    </citation>
    <scope>NUCLEOTIDE SEQUENCE [LARGE SCALE GENOMIC DNA]</scope>
    <source>
        <strain>UCC118</strain>
    </source>
</reference>
<feature type="chain" id="PRO_0000341123" description="D-alanine--D-alanine ligase">
    <location>
        <begin position="1"/>
        <end position="378"/>
    </location>
</feature>
<feature type="domain" description="ATP-grasp" evidence="2">
    <location>
        <begin position="141"/>
        <end position="347"/>
    </location>
</feature>
<feature type="binding site" evidence="2">
    <location>
        <begin position="171"/>
        <end position="226"/>
    </location>
    <ligand>
        <name>ATP</name>
        <dbReference type="ChEBI" id="CHEBI:30616"/>
    </ligand>
</feature>
<feature type="binding site" evidence="2">
    <location>
        <position position="301"/>
    </location>
    <ligand>
        <name>Mg(2+)</name>
        <dbReference type="ChEBI" id="CHEBI:18420"/>
        <label>1</label>
    </ligand>
</feature>
<feature type="binding site" evidence="2">
    <location>
        <position position="314"/>
    </location>
    <ligand>
        <name>Mg(2+)</name>
        <dbReference type="ChEBI" id="CHEBI:18420"/>
        <label>1</label>
    </ligand>
</feature>
<feature type="binding site" evidence="2">
    <location>
        <position position="314"/>
    </location>
    <ligand>
        <name>Mg(2+)</name>
        <dbReference type="ChEBI" id="CHEBI:18420"/>
        <label>2</label>
    </ligand>
</feature>
<feature type="binding site" evidence="2">
    <location>
        <position position="316"/>
    </location>
    <ligand>
        <name>Mg(2+)</name>
        <dbReference type="ChEBI" id="CHEBI:18420"/>
        <label>2</label>
    </ligand>
</feature>
<dbReference type="EC" id="6.3.2.4" evidence="2"/>
<dbReference type="EMBL" id="CP000233">
    <property type="protein sequence ID" value="ABD99891.1"/>
    <property type="molecule type" value="Genomic_DNA"/>
</dbReference>
<dbReference type="RefSeq" id="WP_011476153.1">
    <property type="nucleotide sequence ID" value="NC_007929.1"/>
</dbReference>
<dbReference type="RefSeq" id="YP_535974.1">
    <property type="nucleotide sequence ID" value="NC_007929.1"/>
</dbReference>
<dbReference type="SMR" id="Q1WT60"/>
<dbReference type="STRING" id="362948.LSL_1083"/>
<dbReference type="KEGG" id="lsl:LSL_1083"/>
<dbReference type="PATRIC" id="fig|362948.14.peg.1155"/>
<dbReference type="HOGENOM" id="CLU_039268_0_1_9"/>
<dbReference type="OrthoDB" id="9813261at2"/>
<dbReference type="UniPathway" id="UPA00219"/>
<dbReference type="Proteomes" id="UP000006559">
    <property type="component" value="Chromosome"/>
</dbReference>
<dbReference type="GO" id="GO:0005829">
    <property type="term" value="C:cytosol"/>
    <property type="evidence" value="ECO:0007669"/>
    <property type="project" value="TreeGrafter"/>
</dbReference>
<dbReference type="GO" id="GO:0005524">
    <property type="term" value="F:ATP binding"/>
    <property type="evidence" value="ECO:0007669"/>
    <property type="project" value="UniProtKB-KW"/>
</dbReference>
<dbReference type="GO" id="GO:0008716">
    <property type="term" value="F:D-alanine-D-alanine ligase activity"/>
    <property type="evidence" value="ECO:0007669"/>
    <property type="project" value="UniProtKB-UniRule"/>
</dbReference>
<dbReference type="GO" id="GO:0046872">
    <property type="term" value="F:metal ion binding"/>
    <property type="evidence" value="ECO:0007669"/>
    <property type="project" value="UniProtKB-KW"/>
</dbReference>
<dbReference type="GO" id="GO:0071555">
    <property type="term" value="P:cell wall organization"/>
    <property type="evidence" value="ECO:0007669"/>
    <property type="project" value="UniProtKB-KW"/>
</dbReference>
<dbReference type="GO" id="GO:0009252">
    <property type="term" value="P:peptidoglycan biosynthetic process"/>
    <property type="evidence" value="ECO:0007669"/>
    <property type="project" value="UniProtKB-UniRule"/>
</dbReference>
<dbReference type="GO" id="GO:0008360">
    <property type="term" value="P:regulation of cell shape"/>
    <property type="evidence" value="ECO:0007669"/>
    <property type="project" value="UniProtKB-KW"/>
</dbReference>
<dbReference type="FunFam" id="3.30.1490.20:FF:000007">
    <property type="entry name" value="D-alanine--D-alanine ligase"/>
    <property type="match status" value="1"/>
</dbReference>
<dbReference type="FunFam" id="3.30.470.20:FF:000008">
    <property type="entry name" value="D-alanine--D-alanine ligase"/>
    <property type="match status" value="1"/>
</dbReference>
<dbReference type="Gene3D" id="3.40.50.20">
    <property type="match status" value="1"/>
</dbReference>
<dbReference type="Gene3D" id="3.30.1490.20">
    <property type="entry name" value="ATP-grasp fold, A domain"/>
    <property type="match status" value="1"/>
</dbReference>
<dbReference type="Gene3D" id="3.30.470.20">
    <property type="entry name" value="ATP-grasp fold, B domain"/>
    <property type="match status" value="1"/>
</dbReference>
<dbReference type="HAMAP" id="MF_00047">
    <property type="entry name" value="Dala_Dala_lig"/>
    <property type="match status" value="1"/>
</dbReference>
<dbReference type="InterPro" id="IPR011761">
    <property type="entry name" value="ATP-grasp"/>
</dbReference>
<dbReference type="InterPro" id="IPR013815">
    <property type="entry name" value="ATP_grasp_subdomain_1"/>
</dbReference>
<dbReference type="InterPro" id="IPR000291">
    <property type="entry name" value="D-Ala_lig_Van_CS"/>
</dbReference>
<dbReference type="InterPro" id="IPR005905">
    <property type="entry name" value="D_ala_D_ala"/>
</dbReference>
<dbReference type="InterPro" id="IPR011095">
    <property type="entry name" value="Dala_Dala_lig_C"/>
</dbReference>
<dbReference type="InterPro" id="IPR011127">
    <property type="entry name" value="Dala_Dala_lig_N"/>
</dbReference>
<dbReference type="InterPro" id="IPR016185">
    <property type="entry name" value="PreATP-grasp_dom_sf"/>
</dbReference>
<dbReference type="NCBIfam" id="TIGR01205">
    <property type="entry name" value="D_ala_D_alaTIGR"/>
    <property type="match status" value="1"/>
</dbReference>
<dbReference type="NCBIfam" id="NF002528">
    <property type="entry name" value="PRK01966.1-4"/>
    <property type="match status" value="1"/>
</dbReference>
<dbReference type="PANTHER" id="PTHR23132">
    <property type="entry name" value="D-ALANINE--D-ALANINE LIGASE"/>
    <property type="match status" value="1"/>
</dbReference>
<dbReference type="PANTHER" id="PTHR23132:SF25">
    <property type="entry name" value="D-ALANINE--D-ALANINE LIGASE A"/>
    <property type="match status" value="1"/>
</dbReference>
<dbReference type="Pfam" id="PF07478">
    <property type="entry name" value="Dala_Dala_lig_C"/>
    <property type="match status" value="1"/>
</dbReference>
<dbReference type="Pfam" id="PF01820">
    <property type="entry name" value="Dala_Dala_lig_N"/>
    <property type="match status" value="1"/>
</dbReference>
<dbReference type="PIRSF" id="PIRSF039102">
    <property type="entry name" value="Ddl/VanB"/>
    <property type="match status" value="1"/>
</dbReference>
<dbReference type="SUPFAM" id="SSF56059">
    <property type="entry name" value="Glutathione synthetase ATP-binding domain-like"/>
    <property type="match status" value="1"/>
</dbReference>
<dbReference type="SUPFAM" id="SSF52440">
    <property type="entry name" value="PreATP-grasp domain"/>
    <property type="match status" value="1"/>
</dbReference>
<dbReference type="PROSITE" id="PS50975">
    <property type="entry name" value="ATP_GRASP"/>
    <property type="match status" value="1"/>
</dbReference>
<dbReference type="PROSITE" id="PS00843">
    <property type="entry name" value="DALA_DALA_LIGASE_1"/>
    <property type="match status" value="1"/>
</dbReference>
<dbReference type="PROSITE" id="PS00844">
    <property type="entry name" value="DALA_DALA_LIGASE_2"/>
    <property type="match status" value="1"/>
</dbReference>
<gene>
    <name evidence="2" type="primary">ddl</name>
    <name type="ordered locus">LSL_1083</name>
</gene>
<keyword id="KW-0067">ATP-binding</keyword>
<keyword id="KW-0133">Cell shape</keyword>
<keyword id="KW-0961">Cell wall biogenesis/degradation</keyword>
<keyword id="KW-0963">Cytoplasm</keyword>
<keyword id="KW-0436">Ligase</keyword>
<keyword id="KW-0460">Magnesium</keyword>
<keyword id="KW-0464">Manganese</keyword>
<keyword id="KW-0479">Metal-binding</keyword>
<keyword id="KW-0547">Nucleotide-binding</keyword>
<keyword id="KW-0573">Peptidoglycan synthesis</keyword>
<keyword id="KW-1185">Reference proteome</keyword>
<proteinExistence type="inferred from homology"/>
<accession>Q1WT60</accession>
<name>DDL_LIGS1</name>
<evidence type="ECO:0000250" key="1"/>
<evidence type="ECO:0000255" key="2">
    <source>
        <dbReference type="HAMAP-Rule" id="MF_00047"/>
    </source>
</evidence>
<sequence>MENKKLHIALLFGGNSSEHDVSKRSAHNIYDALDKDKYDVSVFMFTKKGFLLGNKDSMRIFDGENEDDVVTEVIKDVDFSNPLANIQNLAEVKDVDVFYPVIHGNMGEDGTVQGLFRLLNKPWIGSGVASSGVSFDKDLTKKLLTLNGIRNTKYVLVTPENKADYPYAKVAEELGETLFVKPARQGSSVGIHKVRNEEEYNAALEDGFKYDYKILVEEAIKNPREVECSVLGNRDIKASKLGAIRIPESDDFYDYNNKFVDASGVVFEMPIKLPEKLTKEIQQMSLDAFRALDNRGLARMDFLVDKNDVPYFGEVNTLPGFTNISLYPQLWEVSGISYSELIDQLIQLAIDEFNDNAKIHYDFTKLGTEKVGKKIIGE</sequence>